<dbReference type="EMBL" id="LC086931">
    <property type="protein sequence ID" value="BBG28503.1"/>
    <property type="molecule type" value="Genomic_DNA"/>
</dbReference>
<dbReference type="SMR" id="A0A348HAY1"/>
<dbReference type="CDD" id="cd24163">
    <property type="entry name" value="RWDD2_C"/>
    <property type="match status" value="1"/>
</dbReference>
<dbReference type="Gene3D" id="3.10.110.10">
    <property type="entry name" value="Ubiquitin Conjugating Enzyme"/>
    <property type="match status" value="1"/>
</dbReference>
<dbReference type="InterPro" id="IPR017359">
    <property type="entry name" value="Phi-like"/>
</dbReference>
<dbReference type="InterPro" id="IPR010541">
    <property type="entry name" value="Prp3_C"/>
</dbReference>
<dbReference type="InterPro" id="IPR016135">
    <property type="entry name" value="UBQ-conjugating_enzyme/RWD"/>
</dbReference>
<dbReference type="PANTHER" id="PTHR15955:SF10">
    <property type="entry name" value="DUF1115 DOMAIN PROTEIN (AFU_ORTHOLOGUE AFUA_5G14750)"/>
    <property type="match status" value="1"/>
</dbReference>
<dbReference type="PANTHER" id="PTHR15955">
    <property type="entry name" value="RWD DOMAIN CONTAINING PROTEIN 2"/>
    <property type="match status" value="1"/>
</dbReference>
<dbReference type="Pfam" id="PF06544">
    <property type="entry name" value="Prp3_C"/>
    <property type="match status" value="1"/>
</dbReference>
<dbReference type="PIRSF" id="PIRSF038021">
    <property type="entry name" value="UCP038021_RWDD2"/>
    <property type="match status" value="1"/>
</dbReference>
<dbReference type="SUPFAM" id="SSF54495">
    <property type="entry name" value="UBC-like"/>
    <property type="match status" value="1"/>
</dbReference>
<gene>
    <name evidence="3" type="primary">phiF</name>
</gene>
<name>PHIF_FUNX7</name>
<sequence length="301" mass="33778">MAPSEAPQPLPLCALEHQSLAIDLLLSMFPDEIEQTSSTATSIEHLRQYLDDPSQASPRLPHSVEFTLNLSIDPEHELQLHIRILLEQVNVDIGKDADADEPPLPVITFRCPTWMNRKTHTDLVQRMPLDSPDSILMTVEYLKEESTEYLATCAASSATNEPEAQATSGKLVRVWFYLQSLSTRSKRNDIVNWAPNYDLTGFVLAGKPGILCLEGTSDNISAYMSDIKTRSWSDIPSHQKKISERYREEGQHIERVFQNMREVTGEISKGGHRGNRGEMGEVRRMFEGVGLGEVFAEVLGL</sequence>
<accession>A0A348HAY1</accession>
<feature type="chain" id="PRO_0000458928" description="Phomoidride biosynthesis cluster protein F">
    <location>
        <begin position="1"/>
        <end position="301"/>
    </location>
</feature>
<evidence type="ECO:0000269" key="1">
    <source>
    </source>
</evidence>
<evidence type="ECO:0000269" key="2">
    <source>
    </source>
</evidence>
<evidence type="ECO:0000303" key="3">
    <source>
    </source>
</evidence>
<evidence type="ECO:0000305" key="4"/>
<evidence type="ECO:0000305" key="5">
    <source>
    </source>
</evidence>
<reference key="1">
    <citation type="journal article" date="2015" name="Org. Lett.">
        <title>Biosynthetic study on antihypercholesterolemic agent phomoidride: general biogenesis of fungal dimeric anhydrides.</title>
        <authorList>
            <person name="Fujii R."/>
            <person name="Matsu Y."/>
            <person name="Minami A."/>
            <person name="Nagamine S."/>
            <person name="Takeuchi I."/>
            <person name="Gomi K."/>
            <person name="Oikawa H."/>
        </authorList>
    </citation>
    <scope>NUCLEOTIDE SEQUENCE [GENOMIC DNA]</scope>
    <scope>FUNCTION</scope>
    <source>
        <strain>ATCC 74256</strain>
    </source>
</reference>
<reference key="2">
    <citation type="journal article" date="1997" name="J. Antibiot.">
        <title>CP-225,917 and CP-263,114, novel Ras farnesylation inhibitors from an unidentified fungus. I. Taxonomy, fermentation, isolation, and biochemical properties.</title>
        <authorList>
            <person name="Dabrah T.T."/>
            <person name="Harwood H.J. Jr."/>
            <person name="Huang L.H."/>
            <person name="Jankovich N.D."/>
            <person name="Kaneko T."/>
            <person name="Li J.C."/>
            <person name="Lindsey S."/>
            <person name="Moshier P.M."/>
            <person name="Subashi T.A."/>
            <person name="Therrien M."/>
            <person name="Watts P.C."/>
        </authorList>
    </citation>
    <scope>BIOTECHNOLOGY</scope>
</reference>
<protein>
    <recommendedName>
        <fullName evidence="3">Phomoidride biosynthesis cluster protein F</fullName>
    </recommendedName>
</protein>
<proteinExistence type="evidence at protein level"/>
<organism>
    <name type="scientific">Fungal sp. (strain ATCC 74256)</name>
    <dbReference type="NCBI Taxonomy" id="1729595"/>
    <lineage>
        <taxon>Eukaryota</taxon>
        <taxon>Fungi</taxon>
    </lineage>
</organism>
<comment type="function">
    <text evidence="1 4 5">Part of the gene cluster that mediates the biosynthesis of the antihypercholesterolemic agents phomoidrides which are dimeric anhydrides (PubMed:26558485). The function of phiF within the pathway has still to be determined (Probable). The pathway begins with the highly reducing polyketide synthase phiA that catalyzes the formation of a C12-fatty acyl-ACP, starting from one acetate and 5 malonate units. The hydrolase phiM is involved in the release of the C12-fatty acyl chain from phiA. The alkylcitrate synthase (ACS) phiJ and the alkylcitrate dehydratase (ACDH) phiI then give rise to decarboxylated monomeric anhydrides by coupling the C12-fatty acyl chain with oxalacetic acid. The cyclase phiC is responsible for the dimerization of the monomeric anhydrides which leads to the production of prephomoidride that contains the characteristic bicyclo[4.3.1]deca-1,6-diene system of phomoidrides. Iterative oxidation catalyzed by the alpha-ketoglutarate-dependent dioxygenase phiK produced then phomoidride A. Finally, the methyltransferase phiE converts phomoidride A to phomoidride B via an acetalization reaction. The phosphatidylethanolamine-binding protein phiB and phiN are not essential for dimerization and their functions have still to be determined (Probable).</text>
</comment>
<comment type="biotechnology">
    <text evidence="2">Phomoidrides A and B (also known as CP-225,917 and CP-263,114) are potent inhibitors of Ras farnesyltransferase and squalene synthase (PubMed:9066758). CP-225,917 and CP-263,114 inhibit Ras farnesyl transferase from rat brain with IC(50) values of 6 uM and 20 uoM, respectively (PubMed:9066758). CP-225,917 inhibits squalene synthase with an IC(50) value of 43 uM and CP-263,114 with an IC(50) of 160 uM (PubMed:9066758).</text>
</comment>